<sequence>MELRAFCVILLITVLAVSSQAAKNKKEKGKKGASDCTEWTWGSCIPNSKDCGAGTREGTCKEETRKLKCKIPCNWKKAFGADCKYKFENWGECNATTGQKVRSGTLKKALYNADCQQTVEATKPCSLKTKSKSKGKKGKGKE</sequence>
<comment type="function">
    <text evidence="2 4 7 8">Secreted protein that functions as a cytokine and growth factor and mediates its signal through cell-surface proteoglycan and non-proteoglycan receptors. Binds cell-surface proteoglycan receptors via their chondroitin sulfate (CS) groups. Thereby regulates many processes like inflammatory response, cell proliferation, cell adhesion, cell growth, cell survival, tissue regeneration, cell differentiation and cell migration (By similarity). Inhibits mesoderm formation and promotes neural formation during development (PubMed:9538212). Plays a role in development of the neuromuscular junction (NMJ) (PubMed:9361288). Has antibacterial activity against both Gram-positive and Gram-negative bacteria (PubMed:20308059).</text>
</comment>
<comment type="subcellular location">
    <subcellularLocation>
        <location evidence="1">Secreted</location>
    </subcellularLocation>
</comment>
<comment type="tissue specificity">
    <text evidence="5 6 7">Expression at the mid-gastrula stage begins in the neural anlage, and becomes increasingly prominent in the central nervous system and head mesenchyme during neurula stages. Although the mRNA is localized to the developing central nervous system (CNS), the protein is deposited at the neuromuscular junction (NMJ). In the tailbud stage embryo, expressed in the head and tail regions as well as in the CNS. In adults, expression is highest in the brain, eye and bone, with lower expression in the heart and lung. Not expressed in the ovary.</text>
</comment>
<comment type="developmental stage">
    <text evidence="7">Expressed zygotically from the mid-gastrula stage.</text>
</comment>
<comment type="similarity">
    <text evidence="10">Belongs to the pleiotrophin family.</text>
</comment>
<reference key="1">
    <citation type="journal article" date="1994" name="Gene">
        <title>Cloning and sequence of the Xenopus laevis homologue of the midkine cDNA.</title>
        <authorList>
            <person name="Fu C."/>
            <person name="Maminta-Smith L.D."/>
            <person name="Guo C."/>
            <person name="Deuel T.F."/>
        </authorList>
    </citation>
    <scope>NUCLEOTIDE SEQUENCE [MRNA]</scope>
    <source>
        <tissue>Embryonic head</tissue>
    </source>
</reference>
<reference key="2">
    <citation type="journal article" date="1995" name="Biochem. Biophys. Res. Commun.">
        <title>Developmental and differential regulations in gene expression of Xenopus pleiotrophic factors-alpha and -beta.</title>
        <authorList>
            <person name="Tsujimura A."/>
            <person name="Yasojima K."/>
            <person name="Kuboki Y."/>
            <person name="Suzuki A."/>
            <person name="Ueno N."/>
            <person name="Shiokawa K."/>
            <person name="Hashimoto-Gotoh T."/>
        </authorList>
    </citation>
    <scope>NUCLEOTIDE SEQUENCE [MRNA]</scope>
    <scope>TISSUE SPECIFICITY</scope>
    <source>
        <tissue>Brain</tissue>
    </source>
</reference>
<reference key="3">
    <citation type="journal article" date="1995" name="J. Biochem.">
        <title>Restricted expression of Xenopus midkine gene during early development.</title>
        <authorList>
            <person name="Sekiguchi K."/>
            <person name="Yokota C."/>
            <person name="Asashima M."/>
            <person name="Kaname T."/>
            <person name="Fan Q.W."/>
            <person name="Muramatsu T."/>
            <person name="Kadomatsu K."/>
        </authorList>
    </citation>
    <scope>NUCLEOTIDE SEQUENCE [MRNA]</scope>
    <scope>TISSUE SPECIFICITY</scope>
    <source>
        <tissue>Embryo</tissue>
    </source>
</reference>
<reference key="4">
    <citation type="journal article" date="1997" name="Mol. Cell. Neurosci.">
        <title>A role of midkine in the development of the neuromuscular junction.</title>
        <authorList>
            <person name="Zhou H."/>
            <person name="Muramatsu T."/>
            <person name="Halfter W."/>
            <person name="Tsim K.W."/>
            <person name="Peng H.B."/>
        </authorList>
    </citation>
    <scope>NUCLEOTIDE SEQUENCE [MRNA]</scope>
    <scope>FUNCTION</scope>
    <scope>TISSUE SPECIFICITY</scope>
    <scope>DEVELOPMENTAL STAGE</scope>
    <source>
        <tissue>Tail bud</tissue>
    </source>
</reference>
<reference key="5">
    <citation type="submission" date="2005-11" db="EMBL/GenBank/DDBJ databases">
        <authorList>
            <consortium name="NIH - Xenopus Gene Collection (XGC) project"/>
        </authorList>
    </citation>
    <scope>NUCLEOTIDE SEQUENCE [LARGE SCALE MRNA]</scope>
    <source>
        <tissue>Eye</tissue>
    </source>
</reference>
<reference key="6">
    <citation type="journal article" date="1998" name="J. Biochem.">
        <title>Midkine counteracts the activin signal in mesoderm induction and promotes neural formation.</title>
        <authorList>
            <person name="Yokota C."/>
            <person name="Takahashi S."/>
            <person name="Eisaki A."/>
            <person name="Asashima M."/>
            <person name="Akhter S."/>
            <person name="Muramatsu T."/>
            <person name="Kadomatsu K."/>
        </authorList>
    </citation>
    <scope>FUNCTION</scope>
</reference>
<reference key="7">
    <citation type="journal article" date="2010" name="J. Biol. Chem.">
        <title>Midkine and pleiotrophin have bactericidal properties: preserved antibacterial activity in a family of heparin-binding growth factors during evolution.</title>
        <authorList>
            <person name="Svensson S.L."/>
            <person name="Pasupuleti M."/>
            <person name="Walse B."/>
            <person name="Malmsten M."/>
            <person name="Morgelin M."/>
            <person name="Sjogren C."/>
            <person name="Olin A.I."/>
            <person name="Collin M."/>
            <person name="Schmidtchen A."/>
            <person name="Palmer R."/>
            <person name="Egesten A."/>
        </authorList>
    </citation>
    <scope>FUNCTION</scope>
</reference>
<proteinExistence type="evidence at transcript level"/>
<keyword id="KW-0044">Antibiotic</keyword>
<keyword id="KW-0929">Antimicrobial</keyword>
<keyword id="KW-0217">Developmental protein</keyword>
<keyword id="KW-1015">Disulfide bond</keyword>
<keyword id="KW-0339">Growth factor</keyword>
<keyword id="KW-0358">Heparin-binding</keyword>
<keyword id="KW-0497">Mitogen</keyword>
<keyword id="KW-1185">Reference proteome</keyword>
<keyword id="KW-0964">Secreted</keyword>
<keyword id="KW-0732">Signal</keyword>
<organism>
    <name type="scientific">Xenopus laevis</name>
    <name type="common">African clawed frog</name>
    <dbReference type="NCBI Taxonomy" id="8355"/>
    <lineage>
        <taxon>Eukaryota</taxon>
        <taxon>Metazoa</taxon>
        <taxon>Chordata</taxon>
        <taxon>Craniata</taxon>
        <taxon>Vertebrata</taxon>
        <taxon>Euteleostomi</taxon>
        <taxon>Amphibia</taxon>
        <taxon>Batrachia</taxon>
        <taxon>Anura</taxon>
        <taxon>Pipoidea</taxon>
        <taxon>Pipidae</taxon>
        <taxon>Xenopodinae</taxon>
        <taxon>Xenopus</taxon>
        <taxon>Xenopus</taxon>
    </lineage>
</organism>
<evidence type="ECO:0000250" key="1"/>
<evidence type="ECO:0000250" key="2">
    <source>
        <dbReference type="UniProtKB" id="P21741"/>
    </source>
</evidence>
<evidence type="ECO:0000255" key="3"/>
<evidence type="ECO:0000269" key="4">
    <source>
    </source>
</evidence>
<evidence type="ECO:0000269" key="5">
    <source>
    </source>
</evidence>
<evidence type="ECO:0000269" key="6">
    <source>
    </source>
</evidence>
<evidence type="ECO:0000269" key="7">
    <source>
    </source>
</evidence>
<evidence type="ECO:0000269" key="8">
    <source>
    </source>
</evidence>
<evidence type="ECO:0000303" key="9">
    <source>
    </source>
</evidence>
<evidence type="ECO:0000305" key="10"/>
<protein>
    <recommendedName>
        <fullName evidence="10">Midkine-A</fullName>
        <shortName>MK-A</shortName>
        <shortName>XMK</shortName>
    </recommendedName>
    <alternativeName>
        <fullName evidence="9">Pleiotrophic factor-alpha-1</fullName>
        <shortName>PTF-alpha-1</shortName>
        <shortName>X-PTF-alpha1</shortName>
    </alternativeName>
</protein>
<accession>P48530</accession>
<accession>Q32N64</accession>
<accession>Q91547</accession>
<accession>Q91676</accession>
<dbReference type="EMBL" id="U06048">
    <property type="protein sequence ID" value="AAA57319.1"/>
    <property type="molecule type" value="mRNA"/>
</dbReference>
<dbReference type="EMBL" id="D42058">
    <property type="protein sequence ID" value="BAA07658.1"/>
    <property type="molecule type" value="mRNA"/>
</dbReference>
<dbReference type="EMBL" id="S80453">
    <property type="protein sequence ID" value="AAB35853.2"/>
    <property type="molecule type" value="mRNA"/>
</dbReference>
<dbReference type="EMBL" id="BC108811">
    <property type="protein sequence ID" value="AAI08812.1"/>
    <property type="molecule type" value="mRNA"/>
</dbReference>
<dbReference type="PIR" id="I51651">
    <property type="entry name" value="I51651"/>
</dbReference>
<dbReference type="PIR" id="JC4168">
    <property type="entry name" value="JC4168"/>
</dbReference>
<dbReference type="PIR" id="JC4272">
    <property type="entry name" value="JC4272"/>
</dbReference>
<dbReference type="RefSeq" id="NP_001081356.1">
    <property type="nucleotide sequence ID" value="NM_001087887.1"/>
</dbReference>
<dbReference type="RefSeq" id="XP_018114941.1">
    <property type="nucleotide sequence ID" value="XM_018259452.1"/>
</dbReference>
<dbReference type="RefSeq" id="XP_018114942.1">
    <property type="nucleotide sequence ID" value="XM_018259453.1"/>
</dbReference>
<dbReference type="SMR" id="P48530"/>
<dbReference type="DNASU" id="397791"/>
<dbReference type="GeneID" id="397791"/>
<dbReference type="KEGG" id="xla:397791"/>
<dbReference type="AGR" id="Xenbase:XB-GENE-488506"/>
<dbReference type="CTD" id="397791"/>
<dbReference type="Xenbase" id="XB-GENE-488506">
    <property type="gene designation" value="mdk.S"/>
</dbReference>
<dbReference type="OMA" id="GNECAEW"/>
<dbReference type="OrthoDB" id="8818336at2759"/>
<dbReference type="Proteomes" id="UP000186698">
    <property type="component" value="Chromosome 4S"/>
</dbReference>
<dbReference type="Bgee" id="397791">
    <property type="expression patterns" value="Expressed in internal ear and 19 other cell types or tissues"/>
</dbReference>
<dbReference type="GO" id="GO:0005576">
    <property type="term" value="C:extracellular region"/>
    <property type="evidence" value="ECO:0007669"/>
    <property type="project" value="UniProtKB-SubCell"/>
</dbReference>
<dbReference type="GO" id="GO:0008083">
    <property type="term" value="F:growth factor activity"/>
    <property type="evidence" value="ECO:0000318"/>
    <property type="project" value="GO_Central"/>
</dbReference>
<dbReference type="GO" id="GO:0043395">
    <property type="term" value="F:heparan sulfate proteoglycan binding"/>
    <property type="evidence" value="ECO:0000314"/>
    <property type="project" value="UniProtKB"/>
</dbReference>
<dbReference type="GO" id="GO:0008201">
    <property type="term" value="F:heparin binding"/>
    <property type="evidence" value="ECO:0000250"/>
    <property type="project" value="UniProtKB"/>
</dbReference>
<dbReference type="GO" id="GO:0042742">
    <property type="term" value="P:defense response to bacterium"/>
    <property type="evidence" value="ECO:0007669"/>
    <property type="project" value="UniProtKB-KW"/>
</dbReference>
<dbReference type="GO" id="GO:0007399">
    <property type="term" value="P:nervous system development"/>
    <property type="evidence" value="ECO:0000315"/>
    <property type="project" value="UniProtKB"/>
</dbReference>
<dbReference type="GO" id="GO:0007528">
    <property type="term" value="P:neuromuscular junction development"/>
    <property type="evidence" value="ECO:0000315"/>
    <property type="project" value="UniProtKB"/>
</dbReference>
<dbReference type="GO" id="GO:0051781">
    <property type="term" value="P:positive regulation of cell division"/>
    <property type="evidence" value="ECO:0007669"/>
    <property type="project" value="UniProtKB-KW"/>
</dbReference>
<dbReference type="GO" id="GO:0009617">
    <property type="term" value="P:response to bacterium"/>
    <property type="evidence" value="ECO:0000315"/>
    <property type="project" value="UniProtKB"/>
</dbReference>
<dbReference type="FunFam" id="2.20.60.10:FF:000002">
    <property type="entry name" value="Midkine a"/>
    <property type="match status" value="1"/>
</dbReference>
<dbReference type="FunFam" id="2.30.90.10:FF:000001">
    <property type="entry name" value="Pleiotrophin"/>
    <property type="match status" value="1"/>
</dbReference>
<dbReference type="Gene3D" id="2.30.90.10">
    <property type="entry name" value="Heparin-binding Growth Factor, Midkine, Chain A- C-terminal Domain"/>
    <property type="match status" value="1"/>
</dbReference>
<dbReference type="Gene3D" id="2.20.60.10">
    <property type="entry name" value="Pleiotrophin/Midkine, N-terminal domain"/>
    <property type="match status" value="1"/>
</dbReference>
<dbReference type="InterPro" id="IPR000762">
    <property type="entry name" value="Midkine_heparin-bd_GF"/>
</dbReference>
<dbReference type="InterPro" id="IPR020090">
    <property type="entry name" value="PTN/MK_C_dom"/>
</dbReference>
<dbReference type="InterPro" id="IPR038130">
    <property type="entry name" value="PTN/MK_C_dom_sf"/>
</dbReference>
<dbReference type="InterPro" id="IPR020091">
    <property type="entry name" value="PTN/MK_diS_sf"/>
</dbReference>
<dbReference type="InterPro" id="IPR020089">
    <property type="entry name" value="PTN/MK_N_dom"/>
</dbReference>
<dbReference type="InterPro" id="IPR037122">
    <property type="entry name" value="PTN/MK_N_dom_sf"/>
</dbReference>
<dbReference type="InterPro" id="IPR020092">
    <property type="entry name" value="PTN_MK_heparin-bd_GF_CS"/>
</dbReference>
<dbReference type="PANTHER" id="PTHR13850:SF2">
    <property type="entry name" value="MIDKINE"/>
    <property type="match status" value="1"/>
</dbReference>
<dbReference type="PANTHER" id="PTHR13850">
    <property type="entry name" value="PLEIOTROPHIN FAMILY MEMBER"/>
    <property type="match status" value="1"/>
</dbReference>
<dbReference type="Pfam" id="PF01091">
    <property type="entry name" value="PTN_MK_C"/>
    <property type="match status" value="1"/>
</dbReference>
<dbReference type="Pfam" id="PF05196">
    <property type="entry name" value="PTN_MK_N"/>
    <property type="match status" value="1"/>
</dbReference>
<dbReference type="PRINTS" id="PR00269">
    <property type="entry name" value="PTNMIDKINE"/>
</dbReference>
<dbReference type="SMART" id="SM00193">
    <property type="entry name" value="PTN"/>
    <property type="match status" value="1"/>
</dbReference>
<dbReference type="SUPFAM" id="SSF57288">
    <property type="entry name" value="Midkine"/>
    <property type="match status" value="2"/>
</dbReference>
<dbReference type="PROSITE" id="PS00619">
    <property type="entry name" value="PTN_MK_1"/>
    <property type="match status" value="1"/>
</dbReference>
<dbReference type="PROSITE" id="PS00620">
    <property type="entry name" value="PTN_MK_2"/>
    <property type="match status" value="1"/>
</dbReference>
<feature type="signal peptide" evidence="3">
    <location>
        <begin position="1"/>
        <end position="20"/>
    </location>
</feature>
<feature type="chain" id="PRO_0000024666" description="Midkine-A">
    <location>
        <begin position="21"/>
        <end position="142"/>
    </location>
</feature>
<feature type="disulfide bond" evidence="1">
    <location>
        <begin position="36"/>
        <end position="60"/>
    </location>
</feature>
<feature type="disulfide bond" evidence="1">
    <location>
        <begin position="44"/>
        <end position="69"/>
    </location>
</feature>
<feature type="disulfide bond" evidence="1">
    <location>
        <begin position="51"/>
        <end position="73"/>
    </location>
</feature>
<feature type="disulfide bond" evidence="1">
    <location>
        <begin position="83"/>
        <end position="115"/>
    </location>
</feature>
<feature type="disulfide bond" evidence="1">
    <location>
        <begin position="93"/>
        <end position="125"/>
    </location>
</feature>
<feature type="sequence conflict" description="In Ref. 3; AAB35853." evidence="10" ref="3">
    <original>V</original>
    <variation>I</variation>
    <location>
        <position position="14"/>
    </location>
</feature>
<feature type="sequence conflict" description="In Ref. 1; AAA57319." evidence="10" ref="1">
    <original>P</original>
    <variation>L</variation>
    <location>
        <position position="72"/>
    </location>
</feature>
<gene>
    <name type="primary">mdk-a</name>
</gene>
<name>MKA_XENLA</name>